<feature type="chain" id="PRO_0000204980" description="DNA repair protein RecO">
    <location>
        <begin position="1"/>
        <end position="236"/>
    </location>
</feature>
<dbReference type="EMBL" id="CR378673">
    <property type="protein sequence ID" value="CAG21403.1"/>
    <property type="molecule type" value="Genomic_DNA"/>
</dbReference>
<dbReference type="RefSeq" id="WP_011219662.1">
    <property type="nucleotide sequence ID" value="NC_006370.1"/>
</dbReference>
<dbReference type="SMR" id="Q6LMS4"/>
<dbReference type="STRING" id="298386.PBPRA3087"/>
<dbReference type="KEGG" id="ppr:PBPRA3087"/>
<dbReference type="eggNOG" id="COG1381">
    <property type="taxonomic scope" value="Bacteria"/>
</dbReference>
<dbReference type="HOGENOM" id="CLU_066645_1_0_6"/>
<dbReference type="Proteomes" id="UP000000593">
    <property type="component" value="Chromosome 1"/>
</dbReference>
<dbReference type="GO" id="GO:0043590">
    <property type="term" value="C:bacterial nucleoid"/>
    <property type="evidence" value="ECO:0007669"/>
    <property type="project" value="TreeGrafter"/>
</dbReference>
<dbReference type="GO" id="GO:0006310">
    <property type="term" value="P:DNA recombination"/>
    <property type="evidence" value="ECO:0007669"/>
    <property type="project" value="UniProtKB-UniRule"/>
</dbReference>
<dbReference type="GO" id="GO:0006302">
    <property type="term" value="P:double-strand break repair"/>
    <property type="evidence" value="ECO:0007669"/>
    <property type="project" value="TreeGrafter"/>
</dbReference>
<dbReference type="Gene3D" id="2.40.50.140">
    <property type="entry name" value="Nucleic acid-binding proteins"/>
    <property type="match status" value="1"/>
</dbReference>
<dbReference type="Gene3D" id="1.20.1440.120">
    <property type="entry name" value="Recombination protein O, C-terminal domain"/>
    <property type="match status" value="1"/>
</dbReference>
<dbReference type="HAMAP" id="MF_00201">
    <property type="entry name" value="RecO"/>
    <property type="match status" value="1"/>
</dbReference>
<dbReference type="InterPro" id="IPR037278">
    <property type="entry name" value="ARFGAP/RecO"/>
</dbReference>
<dbReference type="InterPro" id="IPR022572">
    <property type="entry name" value="DNA_rep/recomb_RecO_N"/>
</dbReference>
<dbReference type="InterPro" id="IPR012340">
    <property type="entry name" value="NA-bd_OB-fold"/>
</dbReference>
<dbReference type="InterPro" id="IPR003717">
    <property type="entry name" value="RecO"/>
</dbReference>
<dbReference type="InterPro" id="IPR042242">
    <property type="entry name" value="RecO_C"/>
</dbReference>
<dbReference type="NCBIfam" id="TIGR00613">
    <property type="entry name" value="reco"/>
    <property type="match status" value="1"/>
</dbReference>
<dbReference type="PANTHER" id="PTHR33991">
    <property type="entry name" value="DNA REPAIR PROTEIN RECO"/>
    <property type="match status" value="1"/>
</dbReference>
<dbReference type="PANTHER" id="PTHR33991:SF1">
    <property type="entry name" value="DNA REPAIR PROTEIN RECO"/>
    <property type="match status" value="1"/>
</dbReference>
<dbReference type="Pfam" id="PF02565">
    <property type="entry name" value="RecO_C"/>
    <property type="match status" value="1"/>
</dbReference>
<dbReference type="Pfam" id="PF11967">
    <property type="entry name" value="RecO_N"/>
    <property type="match status" value="1"/>
</dbReference>
<dbReference type="SUPFAM" id="SSF57863">
    <property type="entry name" value="ArfGap/RecO-like zinc finger"/>
    <property type="match status" value="1"/>
</dbReference>
<dbReference type="SUPFAM" id="SSF50249">
    <property type="entry name" value="Nucleic acid-binding proteins"/>
    <property type="match status" value="1"/>
</dbReference>
<proteinExistence type="inferred from homology"/>
<protein>
    <recommendedName>
        <fullName evidence="1">DNA repair protein RecO</fullName>
    </recommendedName>
    <alternativeName>
        <fullName evidence="1">Recombination protein O</fullName>
    </alternativeName>
</protein>
<sequence length="236" mass="27082">MEGLQRCFVLHYRPYSETSLILDVFSEDYGRLTILSKGARRKRSNLKGTLQPFTPLFMKWTGRGSMKTLTHAEPISISLPMRGYILYSAFYLNEVLVRVLENDTPYPVLFMDYLNALRELAQADNPEPALRRFELALLHHLGYGIDFLHCAGSGLPIDDLMTYHYREQKGFIASMMTGHFTFTGNQLLAIAARRFETPDQLKAAKRFTRIALKPYLGGKPLKSRELFIPRTRNIGK</sequence>
<gene>
    <name evidence="1" type="primary">recO</name>
    <name type="ordered locus">PBPRA3087</name>
</gene>
<evidence type="ECO:0000255" key="1">
    <source>
        <dbReference type="HAMAP-Rule" id="MF_00201"/>
    </source>
</evidence>
<accession>Q6LMS4</accession>
<reference key="1">
    <citation type="journal article" date="2005" name="Science">
        <title>Life at depth: Photobacterium profundum genome sequence and expression analysis.</title>
        <authorList>
            <person name="Vezzi A."/>
            <person name="Campanaro S."/>
            <person name="D'Angelo M."/>
            <person name="Simonato F."/>
            <person name="Vitulo N."/>
            <person name="Lauro F.M."/>
            <person name="Cestaro A."/>
            <person name="Malacrida G."/>
            <person name="Simionati B."/>
            <person name="Cannata N."/>
            <person name="Romualdi C."/>
            <person name="Bartlett D.H."/>
            <person name="Valle G."/>
        </authorList>
    </citation>
    <scope>NUCLEOTIDE SEQUENCE [LARGE SCALE GENOMIC DNA]</scope>
    <source>
        <strain>ATCC BAA-1253 / SS9</strain>
    </source>
</reference>
<organism>
    <name type="scientific">Photobacterium profundum (strain SS9)</name>
    <dbReference type="NCBI Taxonomy" id="298386"/>
    <lineage>
        <taxon>Bacteria</taxon>
        <taxon>Pseudomonadati</taxon>
        <taxon>Pseudomonadota</taxon>
        <taxon>Gammaproteobacteria</taxon>
        <taxon>Vibrionales</taxon>
        <taxon>Vibrionaceae</taxon>
        <taxon>Photobacterium</taxon>
    </lineage>
</organism>
<name>RECO_PHOPR</name>
<keyword id="KW-0227">DNA damage</keyword>
<keyword id="KW-0233">DNA recombination</keyword>
<keyword id="KW-0234">DNA repair</keyword>
<keyword id="KW-1185">Reference proteome</keyword>
<comment type="function">
    <text evidence="1">Involved in DNA repair and RecF pathway recombination.</text>
</comment>
<comment type="similarity">
    <text evidence="1">Belongs to the RecO family.</text>
</comment>